<accession>P59275</accession>
<feature type="chain" id="PRO_0000093592" description="Cobrotoxin-b" evidence="3">
    <location>
        <begin position="1"/>
        <end position="61"/>
    </location>
</feature>
<feature type="site" description="May be the main cause for the toxicity difference between this toxin and cobrotoxin-c">
    <location>
        <position position="56"/>
    </location>
</feature>
<feature type="disulfide bond" evidence="1">
    <location>
        <begin position="3"/>
        <end position="23"/>
    </location>
</feature>
<feature type="disulfide bond" evidence="1">
    <location>
        <begin position="17"/>
        <end position="40"/>
    </location>
</feature>
<feature type="disulfide bond" evidence="1">
    <location>
        <begin position="42"/>
        <end position="53"/>
    </location>
</feature>
<feature type="disulfide bond" evidence="1">
    <location>
        <begin position="54"/>
        <end position="59"/>
    </location>
</feature>
<evidence type="ECO:0000250" key="1">
    <source>
        <dbReference type="UniProtKB" id="P0C1Z0"/>
    </source>
</evidence>
<evidence type="ECO:0000269" key="2">
    <source>
    </source>
</evidence>
<evidence type="ECO:0000269" key="3">
    <source>
    </source>
</evidence>
<evidence type="ECO:0000303" key="4">
    <source>
    </source>
</evidence>
<evidence type="ECO:0000303" key="5">
    <source>
    </source>
</evidence>
<evidence type="ECO:0000305" key="6"/>
<evidence type="ECO:0000305" key="7">
    <source>
    </source>
</evidence>
<protein>
    <recommendedName>
        <fullName evidence="5">Cobrotoxin-b</fullName>
        <shortName evidence="5">CBT-b</shortName>
    </recommendedName>
    <alternativeName>
        <fullName evidence="4">Short neurotoxin III</fullName>
        <shortName evidence="4">NT3</shortName>
    </alternativeName>
</protein>
<comment type="function">
    <text evidence="3 7">Produces peripheral paralysis by blocking neuromuscular transmission at the postsynaptic site. Binds to the nicotinic acetylcholine receptor.</text>
</comment>
<comment type="subcellular location">
    <subcellularLocation>
        <location evidence="3">Secreted</location>
    </subcellularLocation>
</comment>
<comment type="tissue specificity">
    <text evidence="6">Expressed by the venom gland.</text>
</comment>
<comment type="toxic dose">
    <text evidence="3">LD(50) is 400 mg/kg by intraperitoneal injection into mice.</text>
</comment>
<comment type="miscellaneous">
    <text evidence="2">It inhibits muscle contraction with an IC(50) of 0.23 ug/ml.</text>
</comment>
<comment type="similarity">
    <text evidence="6">Belongs to the three-finger toxin family. Short-chain subfamily. Type I alpha-neurotoxin sub-subfamily.</text>
</comment>
<proteinExistence type="evidence at protein level"/>
<dbReference type="SMR" id="P59275"/>
<dbReference type="GO" id="GO:0005576">
    <property type="term" value="C:extracellular region"/>
    <property type="evidence" value="ECO:0007669"/>
    <property type="project" value="UniProtKB-SubCell"/>
</dbReference>
<dbReference type="GO" id="GO:0099106">
    <property type="term" value="F:ion channel regulator activity"/>
    <property type="evidence" value="ECO:0007669"/>
    <property type="project" value="UniProtKB-KW"/>
</dbReference>
<dbReference type="GO" id="GO:0090729">
    <property type="term" value="F:toxin activity"/>
    <property type="evidence" value="ECO:0007669"/>
    <property type="project" value="UniProtKB-KW"/>
</dbReference>
<dbReference type="CDD" id="cd00206">
    <property type="entry name" value="TFP_snake_toxin"/>
    <property type="match status" value="1"/>
</dbReference>
<dbReference type="FunFam" id="2.10.60.10:FF:000024">
    <property type="entry name" value="Cytotoxin 1"/>
    <property type="match status" value="1"/>
</dbReference>
<dbReference type="Gene3D" id="2.10.60.10">
    <property type="entry name" value="CD59"/>
    <property type="match status" value="1"/>
</dbReference>
<dbReference type="InterPro" id="IPR003571">
    <property type="entry name" value="Snake_3FTx"/>
</dbReference>
<dbReference type="InterPro" id="IPR045860">
    <property type="entry name" value="Snake_toxin-like_sf"/>
</dbReference>
<dbReference type="InterPro" id="IPR018354">
    <property type="entry name" value="Snake_toxin_con_site"/>
</dbReference>
<dbReference type="InterPro" id="IPR054131">
    <property type="entry name" value="Toxin_cobra-type"/>
</dbReference>
<dbReference type="Pfam" id="PF21947">
    <property type="entry name" value="Toxin_cobra-type"/>
    <property type="match status" value="1"/>
</dbReference>
<dbReference type="SUPFAM" id="SSF57302">
    <property type="entry name" value="Snake toxin-like"/>
    <property type="match status" value="1"/>
</dbReference>
<dbReference type="PROSITE" id="PS00272">
    <property type="entry name" value="SNAKE_TOXIN"/>
    <property type="match status" value="1"/>
</dbReference>
<sequence>LECHNQQSSQTPTTKTCSGETNCYKKWWSDHRGTIIERGCGCPKVKPGVNLNCCRRDRCNN</sequence>
<keyword id="KW-0903">Direct protein sequencing</keyword>
<keyword id="KW-1015">Disulfide bond</keyword>
<keyword id="KW-0872">Ion channel impairing toxin</keyword>
<keyword id="KW-0528">Neurotoxin</keyword>
<keyword id="KW-0629">Postsynaptic neurotoxin</keyword>
<keyword id="KW-0964">Secreted</keyword>
<keyword id="KW-0800">Toxin</keyword>
<organism>
    <name type="scientific">Naja kaouthia</name>
    <name type="common">Monocled cobra</name>
    <name type="synonym">Naja siamensis</name>
    <dbReference type="NCBI Taxonomy" id="8649"/>
    <lineage>
        <taxon>Eukaryota</taxon>
        <taxon>Metazoa</taxon>
        <taxon>Chordata</taxon>
        <taxon>Craniata</taxon>
        <taxon>Vertebrata</taxon>
        <taxon>Euteleostomi</taxon>
        <taxon>Lepidosauria</taxon>
        <taxon>Squamata</taxon>
        <taxon>Bifurcata</taxon>
        <taxon>Unidentata</taxon>
        <taxon>Episquamata</taxon>
        <taxon>Toxicofera</taxon>
        <taxon>Serpentes</taxon>
        <taxon>Colubroidea</taxon>
        <taxon>Elapidae</taxon>
        <taxon>Elapinae</taxon>
        <taxon>Naja</taxon>
    </lineage>
</organism>
<reference key="1">
    <citation type="journal article" date="2002" name="Comp. Biochem. Physiol.">
        <title>A novel short neurotoxin, cobrotoxin c, from monocellate cobra (Naja kaouthia) venom: isolation and purification, primary and secondary structure determination, and tertiary structure modeling.</title>
        <authorList>
            <person name="Meng Q.-X."/>
            <person name="Wang W.-Y."/>
            <person name="Lu Q.-M."/>
            <person name="Jin Y."/>
            <person name="Wei J.-F."/>
            <person name="Zhu S.-W."/>
            <person name="Xiong Y.-L."/>
        </authorList>
    </citation>
    <scope>PROTEIN SEQUENCE</scope>
    <scope>TOXIC DOSE</scope>
    <scope>SUBCELLULAR LOCATION</scope>
    <source>
        <tissue>Venom</tissue>
    </source>
</reference>
<reference key="2">
    <citation type="journal article" date="2002" name="Biochim. Biophys. Acta">
        <title>Structure-function relationship of three neurotoxins from the venom of Naja kaouthia: a comparison between the NMR-derived structure of NT2 with its homologues, NT1 and NT3.</title>
        <authorList>
            <person name="Cheng Y."/>
            <person name="Meng Q.-X."/>
            <person name="Wang W.-Y."/>
            <person name="Wang J."/>
        </authorList>
    </citation>
    <scope>INHIBITORY CONCENTRATION</scope>
</reference>
<name>3S1B_NAJKA</name>